<sequence>MSSEDQFTSIQWDRDDGENTNNTPTDTTIKSKSSKSKKSKKSSSKKKNGNKISPSSTTETSDADDTMKEVTDQLESTQINDDNHEVDDGNKEQNVDANQIGNSDEDPTNSLLLPVNPQPKEPQEEKEDLQQQLQQPQQQLASIQQEPAPIQPPFNAVVNDESLSIQQQQQQQQPTGYVDISYYEKYSIKTTVTHPNRDLDTASKPFISYLVTTTTDNPSILKLTKEKKPKQGEEYLTFSVRRRYGDFRYLYESLSNDFPTVMIPPLPSKSNFKYLTGDTFSSEFVHKRLHSLDRFIRFILQHKILSQSSIFHLFISNSNDWATFTTSLKLKDSSSDESGIVGRVVNEDLITETVMNFLTPSKHKKETNKDILEINDKLKKLYENLIKLDKIFTKLKKKNHELGNDYDQFSNQILKLSSVQKGEDSIMTTNFKIFSDSLNYFSKSYNEMYRYIDENFLISLQDLAKFCLRFIQLIKLKNDKSTDLAVLQDFLNKELANNSGGSGSGSGSGGSGLHQPPNPVISSYQGGIVNNTTQLIKDTLSTSNTTISNTIKSDKIKNLEQEIAKETKILTDLTNKIINEEYPNWEKFNKIEIKNSMLGLCDQNIKFYNDLLEKFGEVEMKLIKRLDEDM</sequence>
<keyword id="KW-0072">Autophagy</keyword>
<keyword id="KW-0175">Coiled coil</keyword>
<keyword id="KW-0963">Cytoplasm</keyword>
<keyword id="KW-0967">Endosome</keyword>
<keyword id="KW-0446">Lipid-binding</keyword>
<keyword id="KW-0472">Membrane</keyword>
<keyword id="KW-0653">Protein transport</keyword>
<keyword id="KW-1185">Reference proteome</keyword>
<keyword id="KW-0813">Transport</keyword>
<organism>
    <name type="scientific">Candida albicans (strain SC5314 / ATCC MYA-2876)</name>
    <name type="common">Yeast</name>
    <dbReference type="NCBI Taxonomy" id="237561"/>
    <lineage>
        <taxon>Eukaryota</taxon>
        <taxon>Fungi</taxon>
        <taxon>Dikarya</taxon>
        <taxon>Ascomycota</taxon>
        <taxon>Saccharomycotina</taxon>
        <taxon>Pichiomycetes</taxon>
        <taxon>Debaryomycetaceae</taxon>
        <taxon>Candida/Lodderomyces clade</taxon>
        <taxon>Candida</taxon>
    </lineage>
</organism>
<dbReference type="EMBL" id="CP017624">
    <property type="protein sequence ID" value="AOW27181.1"/>
    <property type="molecule type" value="Genomic_DNA"/>
</dbReference>
<dbReference type="RefSeq" id="XP_719440.2">
    <property type="nucleotide sequence ID" value="XM_714347.2"/>
</dbReference>
<dbReference type="SMR" id="Q5AD77"/>
<dbReference type="FunCoup" id="Q5AD77">
    <property type="interactions" value="540"/>
</dbReference>
<dbReference type="STRING" id="237561.Q5AD77"/>
<dbReference type="EnsemblFungi" id="C2_01350C_A-T">
    <property type="protein sequence ID" value="C2_01350C_A-T-p1"/>
    <property type="gene ID" value="C2_01350C_A"/>
</dbReference>
<dbReference type="GeneID" id="3638843"/>
<dbReference type="KEGG" id="cal:CAALFM_C201350CA"/>
<dbReference type="CGD" id="CAL0000187768">
    <property type="gene designation" value="SNX4"/>
</dbReference>
<dbReference type="VEuPathDB" id="FungiDB:C2_01350C_A"/>
<dbReference type="eggNOG" id="KOG2273">
    <property type="taxonomic scope" value="Eukaryota"/>
</dbReference>
<dbReference type="HOGENOM" id="CLU_027221_1_0_1"/>
<dbReference type="InParanoid" id="Q5AD77"/>
<dbReference type="OMA" id="WSLHRFI"/>
<dbReference type="OrthoDB" id="205639at2759"/>
<dbReference type="PRO" id="PR:Q5AD77"/>
<dbReference type="Proteomes" id="UP000000559">
    <property type="component" value="Chromosome 2"/>
</dbReference>
<dbReference type="GO" id="GO:0005829">
    <property type="term" value="C:cytosol"/>
    <property type="evidence" value="ECO:0007669"/>
    <property type="project" value="UniProtKB-SubCell"/>
</dbReference>
<dbReference type="GO" id="GO:0005769">
    <property type="term" value="C:early endosome"/>
    <property type="evidence" value="ECO:0000318"/>
    <property type="project" value="GO_Central"/>
</dbReference>
<dbReference type="GO" id="GO:0010008">
    <property type="term" value="C:endosome membrane"/>
    <property type="evidence" value="ECO:0007669"/>
    <property type="project" value="UniProtKB-SubCell"/>
</dbReference>
<dbReference type="GO" id="GO:0000407">
    <property type="term" value="C:phagophore assembly site"/>
    <property type="evidence" value="ECO:0000318"/>
    <property type="project" value="GO_Central"/>
</dbReference>
<dbReference type="GO" id="GO:0034045">
    <property type="term" value="C:phagophore assembly site membrane"/>
    <property type="evidence" value="ECO:0007669"/>
    <property type="project" value="UniProtKB-SubCell"/>
</dbReference>
<dbReference type="GO" id="GO:0035091">
    <property type="term" value="F:phosphatidylinositol binding"/>
    <property type="evidence" value="ECO:0007669"/>
    <property type="project" value="InterPro"/>
</dbReference>
<dbReference type="GO" id="GO:0032456">
    <property type="term" value="P:endocytic recycling"/>
    <property type="evidence" value="ECO:0000318"/>
    <property type="project" value="GO_Central"/>
</dbReference>
<dbReference type="GO" id="GO:0000423">
    <property type="term" value="P:mitophagy"/>
    <property type="evidence" value="ECO:0000318"/>
    <property type="project" value="GO_Central"/>
</dbReference>
<dbReference type="GO" id="GO:0034727">
    <property type="term" value="P:piecemeal microautophagy of the nucleus"/>
    <property type="evidence" value="ECO:0000318"/>
    <property type="project" value="GO_Central"/>
</dbReference>
<dbReference type="GO" id="GO:0015031">
    <property type="term" value="P:protein transport"/>
    <property type="evidence" value="ECO:0000318"/>
    <property type="project" value="GO_Central"/>
</dbReference>
<dbReference type="GO" id="GO:0061709">
    <property type="term" value="P:reticulophagy"/>
    <property type="evidence" value="ECO:0000318"/>
    <property type="project" value="GO_Central"/>
</dbReference>
<dbReference type="CDD" id="cd06863">
    <property type="entry name" value="PX_Atg24p"/>
    <property type="match status" value="1"/>
</dbReference>
<dbReference type="Gene3D" id="1.20.1270.60">
    <property type="entry name" value="Arfaptin homology (AH) domain/BAR domain"/>
    <property type="match status" value="1"/>
</dbReference>
<dbReference type="Gene3D" id="3.30.1520.10">
    <property type="entry name" value="Phox-like domain"/>
    <property type="match status" value="1"/>
</dbReference>
<dbReference type="InterPro" id="IPR027267">
    <property type="entry name" value="AH/BAR_dom_sf"/>
</dbReference>
<dbReference type="InterPro" id="IPR001683">
    <property type="entry name" value="PX_dom"/>
</dbReference>
<dbReference type="InterPro" id="IPR036871">
    <property type="entry name" value="PX_dom_sf"/>
</dbReference>
<dbReference type="PANTHER" id="PTHR45949">
    <property type="entry name" value="SORTING NEXIN-4"/>
    <property type="match status" value="1"/>
</dbReference>
<dbReference type="PANTHER" id="PTHR45949:SF2">
    <property type="entry name" value="SORTING NEXIN-4"/>
    <property type="match status" value="1"/>
</dbReference>
<dbReference type="Pfam" id="PF00787">
    <property type="entry name" value="PX"/>
    <property type="match status" value="1"/>
</dbReference>
<dbReference type="SMART" id="SM00312">
    <property type="entry name" value="PX"/>
    <property type="match status" value="1"/>
</dbReference>
<dbReference type="SUPFAM" id="SSF64268">
    <property type="entry name" value="PX domain"/>
    <property type="match status" value="1"/>
</dbReference>
<dbReference type="PROSITE" id="PS50195">
    <property type="entry name" value="PX"/>
    <property type="match status" value="1"/>
</dbReference>
<protein>
    <recommendedName>
        <fullName>Sorting nexin-4</fullName>
    </recommendedName>
    <alternativeName>
        <fullName>Autophagy-related protein 24</fullName>
    </alternativeName>
</protein>
<accession>Q5AD77</accession>
<accession>A0A1D8PGB5</accession>
<accession>Q5ADK6</accession>
<evidence type="ECO:0000250" key="1">
    <source>
        <dbReference type="UniProtKB" id="P47057"/>
    </source>
</evidence>
<evidence type="ECO:0000250" key="2">
    <source>
        <dbReference type="UniProtKB" id="Q3UR97"/>
    </source>
</evidence>
<evidence type="ECO:0000250" key="3">
    <source>
        <dbReference type="UniProtKB" id="Q6P4T1"/>
    </source>
</evidence>
<evidence type="ECO:0000250" key="4">
    <source>
        <dbReference type="UniProtKB" id="Q96L94"/>
    </source>
</evidence>
<evidence type="ECO:0000255" key="5"/>
<evidence type="ECO:0000255" key="6">
    <source>
        <dbReference type="PROSITE-ProRule" id="PRU00147"/>
    </source>
</evidence>
<evidence type="ECO:0000256" key="7">
    <source>
        <dbReference type="SAM" id="MobiDB-lite"/>
    </source>
</evidence>
<evidence type="ECO:0000305" key="8"/>
<gene>
    <name type="primary">SNX4</name>
    <name type="synonym">ATG24</name>
    <name type="ordered locus">CAALFM_C201350CA</name>
    <name type="ORF">CaO19.1990</name>
    <name type="ORF">CaO19.9541</name>
</gene>
<proteinExistence type="inferred from homology"/>
<comment type="function">
    <text evidence="1">Sorting nexin, involved in the separation or division of vacuoles throughout the entire life cycle of the cells. Involved in retrieval of late-Golgi SNAREs from post-Golgi endosomes to the trans-Golgi network, for cytoplasm to vacuole transport (Cvt), and autophagy of large cargos including mitophagy, pexophagy and glycophagy.</text>
</comment>
<comment type="subcellular location">
    <subcellularLocation>
        <location evidence="1">Cytoplasm</location>
        <location evidence="1">Cytosol</location>
    </subcellularLocation>
    <subcellularLocation>
        <location evidence="1">Preautophagosomal structure membrane</location>
        <topology evidence="1">Peripheral membrane protein</topology>
    </subcellularLocation>
    <subcellularLocation>
        <location evidence="1">Endosome membrane</location>
        <topology evidence="1">Peripheral membrane protein</topology>
    </subcellularLocation>
    <text evidence="1">Endosome and other perivacuolar punctate structures. Associates to phosphatidylinositol 3-phosphate, necessary for peripheral membrane localization to the perivacuolar punctate structures.</text>
</comment>
<comment type="domain">
    <text evidence="4">The PX domain binds phosphatidylinositol 3-phosphate which is necessary for peripheral membrane localization to the perivacuolar punctate structures.</text>
</comment>
<comment type="similarity">
    <text evidence="8">Belongs to the sorting nexin family.</text>
</comment>
<name>SNX4_CANAL</name>
<feature type="chain" id="PRO_0000213808" description="Sorting nexin-4">
    <location>
        <begin position="1"/>
        <end position="630"/>
    </location>
</feature>
<feature type="domain" description="PX" evidence="6">
    <location>
        <begin position="187"/>
        <end position="321"/>
    </location>
</feature>
<feature type="region of interest" description="Disordered" evidence="7">
    <location>
        <begin position="1"/>
        <end position="143"/>
    </location>
</feature>
<feature type="coiled-coil region" evidence="5">
    <location>
        <begin position="361"/>
        <end position="413"/>
    </location>
</feature>
<feature type="coiled-coil region" evidence="5">
    <location>
        <begin position="550"/>
        <end position="581"/>
    </location>
</feature>
<feature type="compositionally biased region" description="Polar residues" evidence="7">
    <location>
        <begin position="1"/>
        <end position="11"/>
    </location>
</feature>
<feature type="compositionally biased region" description="Polar residues" evidence="7">
    <location>
        <begin position="19"/>
        <end position="28"/>
    </location>
</feature>
<feature type="compositionally biased region" description="Basic residues" evidence="7">
    <location>
        <begin position="32"/>
        <end position="49"/>
    </location>
</feature>
<feature type="compositionally biased region" description="Low complexity" evidence="7">
    <location>
        <begin position="50"/>
        <end position="60"/>
    </location>
</feature>
<feature type="compositionally biased region" description="Basic and acidic residues" evidence="7">
    <location>
        <begin position="81"/>
        <end position="94"/>
    </location>
</feature>
<feature type="compositionally biased region" description="Low complexity" evidence="7">
    <location>
        <begin position="130"/>
        <end position="143"/>
    </location>
</feature>
<feature type="binding site" evidence="2">
    <location>
        <position position="243"/>
    </location>
    <ligand>
        <name>a 1,2-diacyl-sn-glycero-3-phospho-(1D-myo-inositol-3-phosphate)</name>
        <dbReference type="ChEBI" id="CHEBI:58088"/>
    </ligand>
</feature>
<feature type="binding site" evidence="4">
    <location>
        <position position="269"/>
    </location>
    <ligand>
        <name>a 1,2-diacyl-sn-glycero-3-phospho-(1D-myo-inositol-3-phosphate)</name>
        <dbReference type="ChEBI" id="CHEBI:58088"/>
    </ligand>
</feature>
<feature type="binding site" evidence="3">
    <location>
        <position position="288"/>
    </location>
    <ligand>
        <name>a 1,2-diacyl-sn-glycero-3-phospho-(1D-myo-inositol-3-phosphate)</name>
        <dbReference type="ChEBI" id="CHEBI:58088"/>
    </ligand>
</feature>
<reference key="1">
    <citation type="journal article" date="2004" name="Proc. Natl. Acad. Sci. U.S.A.">
        <title>The diploid genome sequence of Candida albicans.</title>
        <authorList>
            <person name="Jones T."/>
            <person name="Federspiel N.A."/>
            <person name="Chibana H."/>
            <person name="Dungan J."/>
            <person name="Kalman S."/>
            <person name="Magee B.B."/>
            <person name="Newport G."/>
            <person name="Thorstenson Y.R."/>
            <person name="Agabian N."/>
            <person name="Magee P.T."/>
            <person name="Davis R.W."/>
            <person name="Scherer S."/>
        </authorList>
    </citation>
    <scope>NUCLEOTIDE SEQUENCE [LARGE SCALE GENOMIC DNA]</scope>
    <source>
        <strain>SC5314 / ATCC MYA-2876</strain>
    </source>
</reference>
<reference key="2">
    <citation type="journal article" date="2007" name="Genome Biol.">
        <title>Assembly of the Candida albicans genome into sixteen supercontigs aligned on the eight chromosomes.</title>
        <authorList>
            <person name="van het Hoog M."/>
            <person name="Rast T.J."/>
            <person name="Martchenko M."/>
            <person name="Grindle S."/>
            <person name="Dignard D."/>
            <person name="Hogues H."/>
            <person name="Cuomo C."/>
            <person name="Berriman M."/>
            <person name="Scherer S."/>
            <person name="Magee B.B."/>
            <person name="Whiteway M."/>
            <person name="Chibana H."/>
            <person name="Nantel A."/>
            <person name="Magee P.T."/>
        </authorList>
    </citation>
    <scope>GENOME REANNOTATION</scope>
    <source>
        <strain>SC5314 / ATCC MYA-2876</strain>
    </source>
</reference>
<reference key="3">
    <citation type="journal article" date="2013" name="Genome Biol.">
        <title>Assembly of a phased diploid Candida albicans genome facilitates allele-specific measurements and provides a simple model for repeat and indel structure.</title>
        <authorList>
            <person name="Muzzey D."/>
            <person name="Schwartz K."/>
            <person name="Weissman J.S."/>
            <person name="Sherlock G."/>
        </authorList>
    </citation>
    <scope>NUCLEOTIDE SEQUENCE [LARGE SCALE GENOMIC DNA]</scope>
    <scope>GENOME REANNOTATION</scope>
    <source>
        <strain>SC5314 / ATCC MYA-2876</strain>
    </source>
</reference>